<proteinExistence type="evidence at protein level"/>
<name>Y2420_STAAN</name>
<reference key="1">
    <citation type="journal article" date="2001" name="Lancet">
        <title>Whole genome sequencing of meticillin-resistant Staphylococcus aureus.</title>
        <authorList>
            <person name="Kuroda M."/>
            <person name="Ohta T."/>
            <person name="Uchiyama I."/>
            <person name="Baba T."/>
            <person name="Yuzawa H."/>
            <person name="Kobayashi I."/>
            <person name="Cui L."/>
            <person name="Oguchi A."/>
            <person name="Aoki K."/>
            <person name="Nagai Y."/>
            <person name="Lian J.-Q."/>
            <person name="Ito T."/>
            <person name="Kanamori M."/>
            <person name="Matsumaru H."/>
            <person name="Maruyama A."/>
            <person name="Murakami H."/>
            <person name="Hosoyama A."/>
            <person name="Mizutani-Ui Y."/>
            <person name="Takahashi N.K."/>
            <person name="Sawano T."/>
            <person name="Inoue R."/>
            <person name="Kaito C."/>
            <person name="Sekimizu K."/>
            <person name="Hirakawa H."/>
            <person name="Kuhara S."/>
            <person name="Goto S."/>
            <person name="Yabuzaki J."/>
            <person name="Kanehisa M."/>
            <person name="Yamashita A."/>
            <person name="Oshima K."/>
            <person name="Furuya K."/>
            <person name="Yoshino C."/>
            <person name="Shiba T."/>
            <person name="Hattori M."/>
            <person name="Ogasawara N."/>
            <person name="Hayashi H."/>
            <person name="Hiramatsu K."/>
        </authorList>
    </citation>
    <scope>NUCLEOTIDE SEQUENCE [LARGE SCALE GENOMIC DNA]</scope>
    <source>
        <strain>N315</strain>
    </source>
</reference>
<reference key="2">
    <citation type="submission" date="2004-03" db="UniProtKB">
        <authorList>
            <person name="Scherl A."/>
            <person name="Francois P."/>
            <person name="Bento M."/>
            <person name="Hochstrasser D.F."/>
            <person name="Schrenzel J."/>
            <person name="Corthals G.L."/>
        </authorList>
    </citation>
    <scope>IDENTIFICATION BY MASS SPECTROMETRY</scope>
</reference>
<sequence>MKKLAVILTLVGGLYYAFKKYQERVNQAPNIEY</sequence>
<dbReference type="EMBL" id="BA000018">
    <property type="status" value="NOT_ANNOTATED_CDS"/>
    <property type="molecule type" value="Genomic_DNA"/>
</dbReference>
<dbReference type="SMR" id="P60876"/>
<dbReference type="NCBIfam" id="NF040843">
    <property type="entry name" value="SE2200_fam"/>
    <property type="match status" value="1"/>
</dbReference>
<accession>P60876</accession>
<protein>
    <recommendedName>
        <fullName>Uncharacterized protein SA2420.1</fullName>
    </recommendedName>
</protein>
<gene>
    <name type="ordered locus">SA2420.1</name>
</gene>
<feature type="chain" id="PRO_0000215537" description="Uncharacterized protein SA2420.1">
    <location>
        <begin position="1"/>
        <end position="33"/>
    </location>
</feature>
<organism>
    <name type="scientific">Staphylococcus aureus (strain N315)</name>
    <dbReference type="NCBI Taxonomy" id="158879"/>
    <lineage>
        <taxon>Bacteria</taxon>
        <taxon>Bacillati</taxon>
        <taxon>Bacillota</taxon>
        <taxon>Bacilli</taxon>
        <taxon>Bacillales</taxon>
        <taxon>Staphylococcaceae</taxon>
        <taxon>Staphylococcus</taxon>
    </lineage>
</organism>